<sequence>MTKITVVGAGSWGTALAMVLADNGHDVRIWGNRSELMDEINTKHENSRYLPGITLPSTIVAYSSLEEALVDVNVVLIVVPTKAYREVLQDMKKYVAGPTTWIHASKGIEPGTSKRISEVIEEEIPEDLIKDVVVLSGPSHAEEVGLRQATTVTSAAKRMEAAEEVQDLFMNSYFRVYTNPDIVGVELGGALKNIIALAAGITDGLGLGDNAKAALMTRGLTEIARLGRKMGGNPLTFAGLTGMGDLIVTCTSVHSRNWRAGNMLGKGHSLEEVLESMGMVVEGVRTTKAAHELAEKMEVEMPITAALYDVLFNGNNVKDAVGSLMGRVRKHEVEAIPDLL</sequence>
<feature type="chain" id="PRO_1000190118" description="Glycerol-3-phosphate dehydrogenase [NAD(P)+]">
    <location>
        <begin position="1"/>
        <end position="340"/>
    </location>
</feature>
<feature type="active site" description="Proton acceptor" evidence="1">
    <location>
        <position position="192"/>
    </location>
</feature>
<feature type="binding site" evidence="1">
    <location>
        <position position="11"/>
    </location>
    <ligand>
        <name>NADPH</name>
        <dbReference type="ChEBI" id="CHEBI:57783"/>
    </ligand>
</feature>
<feature type="binding site" evidence="1">
    <location>
        <position position="12"/>
    </location>
    <ligand>
        <name>NADPH</name>
        <dbReference type="ChEBI" id="CHEBI:57783"/>
    </ligand>
</feature>
<feature type="binding site" evidence="1">
    <location>
        <position position="33"/>
    </location>
    <ligand>
        <name>NADPH</name>
        <dbReference type="ChEBI" id="CHEBI:57783"/>
    </ligand>
</feature>
<feature type="binding site" evidence="1">
    <location>
        <position position="106"/>
    </location>
    <ligand>
        <name>NADPH</name>
        <dbReference type="ChEBI" id="CHEBI:57783"/>
    </ligand>
</feature>
<feature type="binding site" evidence="1">
    <location>
        <position position="106"/>
    </location>
    <ligand>
        <name>sn-glycerol 3-phosphate</name>
        <dbReference type="ChEBI" id="CHEBI:57597"/>
    </ligand>
</feature>
<feature type="binding site" evidence="1">
    <location>
        <position position="137"/>
    </location>
    <ligand>
        <name>sn-glycerol 3-phosphate</name>
        <dbReference type="ChEBI" id="CHEBI:57597"/>
    </ligand>
</feature>
<feature type="binding site" evidence="1">
    <location>
        <position position="139"/>
    </location>
    <ligand>
        <name>sn-glycerol 3-phosphate</name>
        <dbReference type="ChEBI" id="CHEBI:57597"/>
    </ligand>
</feature>
<feature type="binding site" evidence="1">
    <location>
        <position position="141"/>
    </location>
    <ligand>
        <name>NADPH</name>
        <dbReference type="ChEBI" id="CHEBI:57783"/>
    </ligand>
</feature>
<feature type="binding site" evidence="1">
    <location>
        <position position="192"/>
    </location>
    <ligand>
        <name>sn-glycerol 3-phosphate</name>
        <dbReference type="ChEBI" id="CHEBI:57597"/>
    </ligand>
</feature>
<feature type="binding site" evidence="1">
    <location>
        <position position="245"/>
    </location>
    <ligand>
        <name>sn-glycerol 3-phosphate</name>
        <dbReference type="ChEBI" id="CHEBI:57597"/>
    </ligand>
</feature>
<feature type="binding site" evidence="1">
    <location>
        <position position="255"/>
    </location>
    <ligand>
        <name>sn-glycerol 3-phosphate</name>
        <dbReference type="ChEBI" id="CHEBI:57597"/>
    </ligand>
</feature>
<feature type="binding site" evidence="1">
    <location>
        <position position="256"/>
    </location>
    <ligand>
        <name>NADPH</name>
        <dbReference type="ChEBI" id="CHEBI:57783"/>
    </ligand>
</feature>
<feature type="binding site" evidence="1">
    <location>
        <position position="256"/>
    </location>
    <ligand>
        <name>sn-glycerol 3-phosphate</name>
        <dbReference type="ChEBI" id="CHEBI:57597"/>
    </ligand>
</feature>
<feature type="binding site" evidence="1">
    <location>
        <position position="257"/>
    </location>
    <ligand>
        <name>sn-glycerol 3-phosphate</name>
        <dbReference type="ChEBI" id="CHEBI:57597"/>
    </ligand>
</feature>
<feature type="binding site" evidence="1">
    <location>
        <position position="280"/>
    </location>
    <ligand>
        <name>NADPH</name>
        <dbReference type="ChEBI" id="CHEBI:57783"/>
    </ligand>
</feature>
<feature type="binding site" evidence="1">
    <location>
        <position position="282"/>
    </location>
    <ligand>
        <name>NADPH</name>
        <dbReference type="ChEBI" id="CHEBI:57783"/>
    </ligand>
</feature>
<proteinExistence type="inferred from homology"/>
<accession>C3P592</accession>
<dbReference type="EC" id="1.1.1.94" evidence="1"/>
<dbReference type="EMBL" id="CP001598">
    <property type="protein sequence ID" value="ACQ49941.1"/>
    <property type="molecule type" value="Genomic_DNA"/>
</dbReference>
<dbReference type="RefSeq" id="WP_000161771.1">
    <property type="nucleotide sequence ID" value="NC_012659.1"/>
</dbReference>
<dbReference type="SMR" id="C3P592"/>
<dbReference type="KEGG" id="bai:BAA_1595"/>
<dbReference type="HOGENOM" id="CLU_033449_0_2_9"/>
<dbReference type="UniPathway" id="UPA00940"/>
<dbReference type="GO" id="GO:0005829">
    <property type="term" value="C:cytosol"/>
    <property type="evidence" value="ECO:0007669"/>
    <property type="project" value="TreeGrafter"/>
</dbReference>
<dbReference type="GO" id="GO:0047952">
    <property type="term" value="F:glycerol-3-phosphate dehydrogenase [NAD(P)+] activity"/>
    <property type="evidence" value="ECO:0007669"/>
    <property type="project" value="UniProtKB-UniRule"/>
</dbReference>
<dbReference type="GO" id="GO:0051287">
    <property type="term" value="F:NAD binding"/>
    <property type="evidence" value="ECO:0007669"/>
    <property type="project" value="InterPro"/>
</dbReference>
<dbReference type="GO" id="GO:0005975">
    <property type="term" value="P:carbohydrate metabolic process"/>
    <property type="evidence" value="ECO:0007669"/>
    <property type="project" value="InterPro"/>
</dbReference>
<dbReference type="GO" id="GO:0046167">
    <property type="term" value="P:glycerol-3-phosphate biosynthetic process"/>
    <property type="evidence" value="ECO:0007669"/>
    <property type="project" value="UniProtKB-UniRule"/>
</dbReference>
<dbReference type="GO" id="GO:0046168">
    <property type="term" value="P:glycerol-3-phosphate catabolic process"/>
    <property type="evidence" value="ECO:0007669"/>
    <property type="project" value="InterPro"/>
</dbReference>
<dbReference type="GO" id="GO:0006650">
    <property type="term" value="P:glycerophospholipid metabolic process"/>
    <property type="evidence" value="ECO:0007669"/>
    <property type="project" value="UniProtKB-UniRule"/>
</dbReference>
<dbReference type="GO" id="GO:0008654">
    <property type="term" value="P:phospholipid biosynthetic process"/>
    <property type="evidence" value="ECO:0007669"/>
    <property type="project" value="UniProtKB-KW"/>
</dbReference>
<dbReference type="FunFam" id="1.10.1040.10:FF:000001">
    <property type="entry name" value="Glycerol-3-phosphate dehydrogenase [NAD(P)+]"/>
    <property type="match status" value="1"/>
</dbReference>
<dbReference type="FunFam" id="3.40.50.720:FF:000019">
    <property type="entry name" value="Glycerol-3-phosphate dehydrogenase [NAD(P)+]"/>
    <property type="match status" value="1"/>
</dbReference>
<dbReference type="Gene3D" id="1.10.1040.10">
    <property type="entry name" value="N-(1-d-carboxylethyl)-l-norvaline Dehydrogenase, domain 2"/>
    <property type="match status" value="1"/>
</dbReference>
<dbReference type="Gene3D" id="3.40.50.720">
    <property type="entry name" value="NAD(P)-binding Rossmann-like Domain"/>
    <property type="match status" value="1"/>
</dbReference>
<dbReference type="HAMAP" id="MF_00394">
    <property type="entry name" value="NAD_Glyc3P_dehydrog"/>
    <property type="match status" value="1"/>
</dbReference>
<dbReference type="InterPro" id="IPR008927">
    <property type="entry name" value="6-PGluconate_DH-like_C_sf"/>
</dbReference>
<dbReference type="InterPro" id="IPR013328">
    <property type="entry name" value="6PGD_dom2"/>
</dbReference>
<dbReference type="InterPro" id="IPR006168">
    <property type="entry name" value="G3P_DH_NAD-dep"/>
</dbReference>
<dbReference type="InterPro" id="IPR006109">
    <property type="entry name" value="G3P_DH_NAD-dep_C"/>
</dbReference>
<dbReference type="InterPro" id="IPR011128">
    <property type="entry name" value="G3P_DH_NAD-dep_N"/>
</dbReference>
<dbReference type="InterPro" id="IPR036291">
    <property type="entry name" value="NAD(P)-bd_dom_sf"/>
</dbReference>
<dbReference type="NCBIfam" id="NF000940">
    <property type="entry name" value="PRK00094.1-2"/>
    <property type="match status" value="1"/>
</dbReference>
<dbReference type="NCBIfam" id="NF000941">
    <property type="entry name" value="PRK00094.1-3"/>
    <property type="match status" value="1"/>
</dbReference>
<dbReference type="NCBIfam" id="NF000942">
    <property type="entry name" value="PRK00094.1-4"/>
    <property type="match status" value="1"/>
</dbReference>
<dbReference type="PANTHER" id="PTHR11728">
    <property type="entry name" value="GLYCEROL-3-PHOSPHATE DEHYDROGENASE"/>
    <property type="match status" value="1"/>
</dbReference>
<dbReference type="PANTHER" id="PTHR11728:SF1">
    <property type="entry name" value="GLYCEROL-3-PHOSPHATE DEHYDROGENASE [NAD(+)] 2, CHLOROPLASTIC"/>
    <property type="match status" value="1"/>
</dbReference>
<dbReference type="Pfam" id="PF07479">
    <property type="entry name" value="NAD_Gly3P_dh_C"/>
    <property type="match status" value="1"/>
</dbReference>
<dbReference type="Pfam" id="PF01210">
    <property type="entry name" value="NAD_Gly3P_dh_N"/>
    <property type="match status" value="1"/>
</dbReference>
<dbReference type="PIRSF" id="PIRSF000114">
    <property type="entry name" value="Glycerol-3-P_dh"/>
    <property type="match status" value="1"/>
</dbReference>
<dbReference type="PRINTS" id="PR00077">
    <property type="entry name" value="GPDHDRGNASE"/>
</dbReference>
<dbReference type="SUPFAM" id="SSF48179">
    <property type="entry name" value="6-phosphogluconate dehydrogenase C-terminal domain-like"/>
    <property type="match status" value="1"/>
</dbReference>
<dbReference type="SUPFAM" id="SSF51735">
    <property type="entry name" value="NAD(P)-binding Rossmann-fold domains"/>
    <property type="match status" value="1"/>
</dbReference>
<dbReference type="PROSITE" id="PS00957">
    <property type="entry name" value="NAD_G3PDH"/>
    <property type="match status" value="1"/>
</dbReference>
<name>GPDA_BACAA</name>
<keyword id="KW-0963">Cytoplasm</keyword>
<keyword id="KW-0444">Lipid biosynthesis</keyword>
<keyword id="KW-0443">Lipid metabolism</keyword>
<keyword id="KW-0520">NAD</keyword>
<keyword id="KW-0521">NADP</keyword>
<keyword id="KW-0547">Nucleotide-binding</keyword>
<keyword id="KW-0560">Oxidoreductase</keyword>
<keyword id="KW-0594">Phospholipid biosynthesis</keyword>
<keyword id="KW-1208">Phospholipid metabolism</keyword>
<comment type="function">
    <text evidence="1">Catalyzes the reduction of the glycolytic intermediate dihydroxyacetone phosphate (DHAP) to sn-glycerol 3-phosphate (G3P), the key precursor for phospholipid synthesis.</text>
</comment>
<comment type="catalytic activity">
    <reaction evidence="1">
        <text>sn-glycerol 3-phosphate + NAD(+) = dihydroxyacetone phosphate + NADH + H(+)</text>
        <dbReference type="Rhea" id="RHEA:11092"/>
        <dbReference type="ChEBI" id="CHEBI:15378"/>
        <dbReference type="ChEBI" id="CHEBI:57540"/>
        <dbReference type="ChEBI" id="CHEBI:57597"/>
        <dbReference type="ChEBI" id="CHEBI:57642"/>
        <dbReference type="ChEBI" id="CHEBI:57945"/>
        <dbReference type="EC" id="1.1.1.94"/>
    </reaction>
    <physiologicalReaction direction="right-to-left" evidence="1">
        <dbReference type="Rhea" id="RHEA:11094"/>
    </physiologicalReaction>
</comment>
<comment type="catalytic activity">
    <reaction evidence="1">
        <text>sn-glycerol 3-phosphate + NADP(+) = dihydroxyacetone phosphate + NADPH + H(+)</text>
        <dbReference type="Rhea" id="RHEA:11096"/>
        <dbReference type="ChEBI" id="CHEBI:15378"/>
        <dbReference type="ChEBI" id="CHEBI:57597"/>
        <dbReference type="ChEBI" id="CHEBI:57642"/>
        <dbReference type="ChEBI" id="CHEBI:57783"/>
        <dbReference type="ChEBI" id="CHEBI:58349"/>
        <dbReference type="EC" id="1.1.1.94"/>
    </reaction>
    <physiologicalReaction direction="right-to-left" evidence="1">
        <dbReference type="Rhea" id="RHEA:11098"/>
    </physiologicalReaction>
</comment>
<comment type="pathway">
    <text evidence="1">Membrane lipid metabolism; glycerophospholipid metabolism.</text>
</comment>
<comment type="subcellular location">
    <subcellularLocation>
        <location evidence="1">Cytoplasm</location>
    </subcellularLocation>
</comment>
<comment type="similarity">
    <text evidence="1">Belongs to the NAD-dependent glycerol-3-phosphate dehydrogenase family.</text>
</comment>
<reference key="1">
    <citation type="submission" date="2009-04" db="EMBL/GenBank/DDBJ databases">
        <title>Genome sequence of Bacillus anthracis A0248.</title>
        <authorList>
            <person name="Dodson R.J."/>
            <person name="Munk A.C."/>
            <person name="Bruce D."/>
            <person name="Detter C."/>
            <person name="Tapia R."/>
            <person name="Sutton G."/>
            <person name="Sims D."/>
            <person name="Brettin T."/>
        </authorList>
    </citation>
    <scope>NUCLEOTIDE SEQUENCE [LARGE SCALE GENOMIC DNA]</scope>
    <source>
        <strain>A0248</strain>
    </source>
</reference>
<protein>
    <recommendedName>
        <fullName evidence="1">Glycerol-3-phosphate dehydrogenase [NAD(P)+]</fullName>
        <ecNumber evidence="1">1.1.1.94</ecNumber>
    </recommendedName>
    <alternativeName>
        <fullName evidence="1">NAD(P)(+)-dependent glycerol-3-phosphate dehydrogenase</fullName>
    </alternativeName>
    <alternativeName>
        <fullName evidence="1">NAD(P)H-dependent dihydroxyacetone-phosphate reductase</fullName>
    </alternativeName>
</protein>
<evidence type="ECO:0000255" key="1">
    <source>
        <dbReference type="HAMAP-Rule" id="MF_00394"/>
    </source>
</evidence>
<gene>
    <name evidence="1" type="primary">gpsA</name>
    <name type="ordered locus">BAA_1595</name>
</gene>
<organism>
    <name type="scientific">Bacillus anthracis (strain A0248)</name>
    <dbReference type="NCBI Taxonomy" id="592021"/>
    <lineage>
        <taxon>Bacteria</taxon>
        <taxon>Bacillati</taxon>
        <taxon>Bacillota</taxon>
        <taxon>Bacilli</taxon>
        <taxon>Bacillales</taxon>
        <taxon>Bacillaceae</taxon>
        <taxon>Bacillus</taxon>
        <taxon>Bacillus cereus group</taxon>
    </lineage>
</organism>